<accession>A9NAM6</accession>
<gene>
    <name evidence="1" type="primary">rplW</name>
    <name type="ordered locus">COXBURSA331_A0339</name>
</gene>
<keyword id="KW-0687">Ribonucleoprotein</keyword>
<keyword id="KW-0689">Ribosomal protein</keyword>
<keyword id="KW-0694">RNA-binding</keyword>
<keyword id="KW-0699">rRNA-binding</keyword>
<comment type="function">
    <text evidence="1">One of the early assembly proteins it binds 23S rRNA. One of the proteins that surrounds the polypeptide exit tunnel on the outside of the ribosome. Forms the main docking site for trigger factor binding to the ribosome.</text>
</comment>
<comment type="subunit">
    <text evidence="1">Part of the 50S ribosomal subunit. Contacts protein L29, and trigger factor when it is bound to the ribosome.</text>
</comment>
<comment type="similarity">
    <text evidence="1">Belongs to the universal ribosomal protein uL23 family.</text>
</comment>
<name>RL23_COXBR</name>
<proteinExistence type="inferred from homology"/>
<reference key="1">
    <citation type="submission" date="2007-11" db="EMBL/GenBank/DDBJ databases">
        <title>Genome sequencing of phylogenetically and phenotypically diverse Coxiella burnetii isolates.</title>
        <authorList>
            <person name="Seshadri R."/>
            <person name="Samuel J.E."/>
        </authorList>
    </citation>
    <scope>NUCLEOTIDE SEQUENCE [LARGE SCALE GENOMIC DNA]</scope>
    <source>
        <strain>RSA 331 / Henzerling II</strain>
    </source>
</reference>
<protein>
    <recommendedName>
        <fullName evidence="1">Large ribosomal subunit protein uL23</fullName>
    </recommendedName>
    <alternativeName>
        <fullName evidence="2">50S ribosomal protein L23</fullName>
    </alternativeName>
</protein>
<organism>
    <name type="scientific">Coxiella burnetii (strain RSA 331 / Henzerling II)</name>
    <dbReference type="NCBI Taxonomy" id="360115"/>
    <lineage>
        <taxon>Bacteria</taxon>
        <taxon>Pseudomonadati</taxon>
        <taxon>Pseudomonadota</taxon>
        <taxon>Gammaproteobacteria</taxon>
        <taxon>Legionellales</taxon>
        <taxon>Coxiellaceae</taxon>
        <taxon>Coxiella</taxon>
    </lineage>
</organism>
<evidence type="ECO:0000255" key="1">
    <source>
        <dbReference type="HAMAP-Rule" id="MF_01369"/>
    </source>
</evidence>
<evidence type="ECO:0000305" key="2"/>
<dbReference type="EMBL" id="CP000890">
    <property type="protein sequence ID" value="ABX78766.1"/>
    <property type="molecule type" value="Genomic_DNA"/>
</dbReference>
<dbReference type="RefSeq" id="WP_005771542.1">
    <property type="nucleotide sequence ID" value="NC_010117.1"/>
</dbReference>
<dbReference type="SMR" id="A9NAM6"/>
<dbReference type="KEGG" id="cbs:COXBURSA331_A0339"/>
<dbReference type="HOGENOM" id="CLU_037562_3_1_6"/>
<dbReference type="GO" id="GO:1990904">
    <property type="term" value="C:ribonucleoprotein complex"/>
    <property type="evidence" value="ECO:0007669"/>
    <property type="project" value="UniProtKB-KW"/>
</dbReference>
<dbReference type="GO" id="GO:0005840">
    <property type="term" value="C:ribosome"/>
    <property type="evidence" value="ECO:0007669"/>
    <property type="project" value="UniProtKB-KW"/>
</dbReference>
<dbReference type="GO" id="GO:0019843">
    <property type="term" value="F:rRNA binding"/>
    <property type="evidence" value="ECO:0007669"/>
    <property type="project" value="UniProtKB-UniRule"/>
</dbReference>
<dbReference type="GO" id="GO:0003735">
    <property type="term" value="F:structural constituent of ribosome"/>
    <property type="evidence" value="ECO:0007669"/>
    <property type="project" value="InterPro"/>
</dbReference>
<dbReference type="GO" id="GO:0006412">
    <property type="term" value="P:translation"/>
    <property type="evidence" value="ECO:0007669"/>
    <property type="project" value="UniProtKB-UniRule"/>
</dbReference>
<dbReference type="FunFam" id="3.30.70.330:FF:000001">
    <property type="entry name" value="50S ribosomal protein L23"/>
    <property type="match status" value="1"/>
</dbReference>
<dbReference type="Gene3D" id="3.30.70.330">
    <property type="match status" value="1"/>
</dbReference>
<dbReference type="HAMAP" id="MF_01369_B">
    <property type="entry name" value="Ribosomal_uL23_B"/>
    <property type="match status" value="1"/>
</dbReference>
<dbReference type="InterPro" id="IPR012677">
    <property type="entry name" value="Nucleotide-bd_a/b_plait_sf"/>
</dbReference>
<dbReference type="InterPro" id="IPR013025">
    <property type="entry name" value="Ribosomal_uL23-like"/>
</dbReference>
<dbReference type="InterPro" id="IPR012678">
    <property type="entry name" value="Ribosomal_uL23/eL15/eS24_sf"/>
</dbReference>
<dbReference type="NCBIfam" id="NF004359">
    <property type="entry name" value="PRK05738.1-3"/>
    <property type="match status" value="1"/>
</dbReference>
<dbReference type="NCBIfam" id="NF004363">
    <property type="entry name" value="PRK05738.2-4"/>
    <property type="match status" value="1"/>
</dbReference>
<dbReference type="PANTHER" id="PTHR11620">
    <property type="entry name" value="60S RIBOSOMAL PROTEIN L23A"/>
    <property type="match status" value="1"/>
</dbReference>
<dbReference type="Pfam" id="PF00276">
    <property type="entry name" value="Ribosomal_L23"/>
    <property type="match status" value="1"/>
</dbReference>
<dbReference type="SUPFAM" id="SSF54189">
    <property type="entry name" value="Ribosomal proteins S24e, L23 and L15e"/>
    <property type="match status" value="1"/>
</dbReference>
<feature type="chain" id="PRO_1000087214" description="Large ribosomal subunit protein uL23">
    <location>
        <begin position="1"/>
        <end position="95"/>
    </location>
</feature>
<sequence length="95" mass="10809">MNEERLFKILLAPHISEKGALTTGQYVFEVMPDATKPEIKRAVEKQFNVTVKSVRTCNVKGKTTRFRQVRGRRKNWKKAYVMLAPGSEIDIAAGE</sequence>